<organism>
    <name type="scientific">Oenococcus oeni (strain ATCC BAA-331 / PSU-1)</name>
    <dbReference type="NCBI Taxonomy" id="203123"/>
    <lineage>
        <taxon>Bacteria</taxon>
        <taxon>Bacillati</taxon>
        <taxon>Bacillota</taxon>
        <taxon>Bacilli</taxon>
        <taxon>Lactobacillales</taxon>
        <taxon>Lactobacillaceae</taxon>
        <taxon>Oenococcus</taxon>
    </lineage>
</organism>
<evidence type="ECO:0000255" key="1">
    <source>
        <dbReference type="HAMAP-Rule" id="MF_00281"/>
    </source>
</evidence>
<protein>
    <recommendedName>
        <fullName evidence="1">Phenylalanine--tRNA ligase alpha subunit</fullName>
        <ecNumber evidence="1">6.1.1.20</ecNumber>
    </recommendedName>
    <alternativeName>
        <fullName evidence="1">Phenylalanyl-tRNA synthetase alpha subunit</fullName>
        <shortName evidence="1">PheRS</shortName>
    </alternativeName>
</protein>
<comment type="catalytic activity">
    <reaction evidence="1">
        <text>tRNA(Phe) + L-phenylalanine + ATP = L-phenylalanyl-tRNA(Phe) + AMP + diphosphate + H(+)</text>
        <dbReference type="Rhea" id="RHEA:19413"/>
        <dbReference type="Rhea" id="RHEA-COMP:9668"/>
        <dbReference type="Rhea" id="RHEA-COMP:9699"/>
        <dbReference type="ChEBI" id="CHEBI:15378"/>
        <dbReference type="ChEBI" id="CHEBI:30616"/>
        <dbReference type="ChEBI" id="CHEBI:33019"/>
        <dbReference type="ChEBI" id="CHEBI:58095"/>
        <dbReference type="ChEBI" id="CHEBI:78442"/>
        <dbReference type="ChEBI" id="CHEBI:78531"/>
        <dbReference type="ChEBI" id="CHEBI:456215"/>
        <dbReference type="EC" id="6.1.1.20"/>
    </reaction>
</comment>
<comment type="cofactor">
    <cofactor evidence="1">
        <name>Mg(2+)</name>
        <dbReference type="ChEBI" id="CHEBI:18420"/>
    </cofactor>
    <text evidence="1">Binds 2 magnesium ions per tetramer.</text>
</comment>
<comment type="subunit">
    <text evidence="1">Tetramer of two alpha and two beta subunits.</text>
</comment>
<comment type="subcellular location">
    <subcellularLocation>
        <location evidence="1">Cytoplasm</location>
    </subcellularLocation>
</comment>
<comment type="similarity">
    <text evidence="1">Belongs to the class-II aminoacyl-tRNA synthetase family. Phe-tRNA synthetase alpha subunit type 1 subfamily.</text>
</comment>
<accession>Q04FD8</accession>
<gene>
    <name evidence="1" type="primary">pheS</name>
    <name type="ordered locus">OEOE_0917</name>
</gene>
<keyword id="KW-0030">Aminoacyl-tRNA synthetase</keyword>
<keyword id="KW-0067">ATP-binding</keyword>
<keyword id="KW-0963">Cytoplasm</keyword>
<keyword id="KW-0436">Ligase</keyword>
<keyword id="KW-0460">Magnesium</keyword>
<keyword id="KW-0479">Metal-binding</keyword>
<keyword id="KW-0547">Nucleotide-binding</keyword>
<keyword id="KW-0648">Protein biosynthesis</keyword>
<keyword id="KW-1185">Reference proteome</keyword>
<feature type="chain" id="PRO_1000006868" description="Phenylalanine--tRNA ligase alpha subunit">
    <location>
        <begin position="1"/>
        <end position="347"/>
    </location>
</feature>
<feature type="binding site" evidence="1">
    <location>
        <position position="259"/>
    </location>
    <ligand>
        <name>Mg(2+)</name>
        <dbReference type="ChEBI" id="CHEBI:18420"/>
        <note>shared with beta subunit</note>
    </ligand>
</feature>
<sequence>MDIKEELEELKKKVSVEIDKSSSVDLIENIRVHLLGKKGDLTKILKGLKDLDPREKPVVGQMANKIRTQLETMISQKKHILEENKLDAQLASEKIDVTLPGETFQIGTKHVLQQIQDQIEDHFLSQGYQVMYGREIETDEYNFERMNLPKDHPARGMQDTFYLTPNVLLRTQTSAMQARAMDKHDFSTGPLKMISPGKVYRRDNDDATHSHQFHQIEGLVVGKKITLADLKGTLQALTDELFGKGHAMRFRQSYFPFTEPSLEVDISWNTVDKNTASQDIEWIEVLGAGMVHPNVLKMANIDPEEYSGFAFGLGPDRFAMIKYGIDDIRNFYLDDLRFLKQFCQVGE</sequence>
<reference key="1">
    <citation type="journal article" date="2006" name="Proc. Natl. Acad. Sci. U.S.A.">
        <title>Comparative genomics of the lactic acid bacteria.</title>
        <authorList>
            <person name="Makarova K.S."/>
            <person name="Slesarev A."/>
            <person name="Wolf Y.I."/>
            <person name="Sorokin A."/>
            <person name="Mirkin B."/>
            <person name="Koonin E.V."/>
            <person name="Pavlov A."/>
            <person name="Pavlova N."/>
            <person name="Karamychev V."/>
            <person name="Polouchine N."/>
            <person name="Shakhova V."/>
            <person name="Grigoriev I."/>
            <person name="Lou Y."/>
            <person name="Rohksar D."/>
            <person name="Lucas S."/>
            <person name="Huang K."/>
            <person name="Goodstein D.M."/>
            <person name="Hawkins T."/>
            <person name="Plengvidhya V."/>
            <person name="Welker D."/>
            <person name="Hughes J."/>
            <person name="Goh Y."/>
            <person name="Benson A."/>
            <person name="Baldwin K."/>
            <person name="Lee J.-H."/>
            <person name="Diaz-Muniz I."/>
            <person name="Dosti B."/>
            <person name="Smeianov V."/>
            <person name="Wechter W."/>
            <person name="Barabote R."/>
            <person name="Lorca G."/>
            <person name="Altermann E."/>
            <person name="Barrangou R."/>
            <person name="Ganesan B."/>
            <person name="Xie Y."/>
            <person name="Rawsthorne H."/>
            <person name="Tamir D."/>
            <person name="Parker C."/>
            <person name="Breidt F."/>
            <person name="Broadbent J.R."/>
            <person name="Hutkins R."/>
            <person name="O'Sullivan D."/>
            <person name="Steele J."/>
            <person name="Unlu G."/>
            <person name="Saier M.H. Jr."/>
            <person name="Klaenhammer T."/>
            <person name="Richardson P."/>
            <person name="Kozyavkin S."/>
            <person name="Weimer B.C."/>
            <person name="Mills D.A."/>
        </authorList>
    </citation>
    <scope>NUCLEOTIDE SEQUENCE [LARGE SCALE GENOMIC DNA]</scope>
    <source>
        <strain>ATCC BAA-331 / PSU-1</strain>
    </source>
</reference>
<name>SYFA_OENOB</name>
<dbReference type="EC" id="6.1.1.20" evidence="1"/>
<dbReference type="EMBL" id="CP000411">
    <property type="protein sequence ID" value="ABJ56834.1"/>
    <property type="molecule type" value="Genomic_DNA"/>
</dbReference>
<dbReference type="RefSeq" id="WP_011677577.1">
    <property type="nucleotide sequence ID" value="NC_008528.1"/>
</dbReference>
<dbReference type="SMR" id="Q04FD8"/>
<dbReference type="STRING" id="203123.OEOE_0917"/>
<dbReference type="KEGG" id="ooe:OEOE_0917"/>
<dbReference type="PATRIC" id="fig|203123.7.peg.931"/>
<dbReference type="eggNOG" id="COG0016">
    <property type="taxonomic scope" value="Bacteria"/>
</dbReference>
<dbReference type="HOGENOM" id="CLU_025086_0_1_9"/>
<dbReference type="Proteomes" id="UP000000774">
    <property type="component" value="Chromosome"/>
</dbReference>
<dbReference type="GO" id="GO:0005737">
    <property type="term" value="C:cytoplasm"/>
    <property type="evidence" value="ECO:0007669"/>
    <property type="project" value="UniProtKB-SubCell"/>
</dbReference>
<dbReference type="GO" id="GO:0005524">
    <property type="term" value="F:ATP binding"/>
    <property type="evidence" value="ECO:0007669"/>
    <property type="project" value="UniProtKB-UniRule"/>
</dbReference>
<dbReference type="GO" id="GO:0140096">
    <property type="term" value="F:catalytic activity, acting on a protein"/>
    <property type="evidence" value="ECO:0007669"/>
    <property type="project" value="UniProtKB-ARBA"/>
</dbReference>
<dbReference type="GO" id="GO:0000287">
    <property type="term" value="F:magnesium ion binding"/>
    <property type="evidence" value="ECO:0007669"/>
    <property type="project" value="UniProtKB-UniRule"/>
</dbReference>
<dbReference type="GO" id="GO:0004826">
    <property type="term" value="F:phenylalanine-tRNA ligase activity"/>
    <property type="evidence" value="ECO:0007669"/>
    <property type="project" value="UniProtKB-UniRule"/>
</dbReference>
<dbReference type="GO" id="GO:0016740">
    <property type="term" value="F:transferase activity"/>
    <property type="evidence" value="ECO:0007669"/>
    <property type="project" value="UniProtKB-ARBA"/>
</dbReference>
<dbReference type="GO" id="GO:0000049">
    <property type="term" value="F:tRNA binding"/>
    <property type="evidence" value="ECO:0007669"/>
    <property type="project" value="InterPro"/>
</dbReference>
<dbReference type="GO" id="GO:0006432">
    <property type="term" value="P:phenylalanyl-tRNA aminoacylation"/>
    <property type="evidence" value="ECO:0007669"/>
    <property type="project" value="UniProtKB-UniRule"/>
</dbReference>
<dbReference type="CDD" id="cd00496">
    <property type="entry name" value="PheRS_alpha_core"/>
    <property type="match status" value="1"/>
</dbReference>
<dbReference type="FunFam" id="3.30.930.10:FF:000003">
    <property type="entry name" value="Phenylalanine--tRNA ligase alpha subunit"/>
    <property type="match status" value="1"/>
</dbReference>
<dbReference type="Gene3D" id="3.30.930.10">
    <property type="entry name" value="Bira Bifunctional Protein, Domain 2"/>
    <property type="match status" value="1"/>
</dbReference>
<dbReference type="HAMAP" id="MF_00281">
    <property type="entry name" value="Phe_tRNA_synth_alpha1"/>
    <property type="match status" value="1"/>
</dbReference>
<dbReference type="InterPro" id="IPR006195">
    <property type="entry name" value="aa-tRNA-synth_II"/>
</dbReference>
<dbReference type="InterPro" id="IPR045864">
    <property type="entry name" value="aa-tRNA-synth_II/BPL/LPL"/>
</dbReference>
<dbReference type="InterPro" id="IPR004529">
    <property type="entry name" value="Phe-tRNA-synth_IIc_asu"/>
</dbReference>
<dbReference type="InterPro" id="IPR004188">
    <property type="entry name" value="Phe-tRNA_ligase_II_N"/>
</dbReference>
<dbReference type="InterPro" id="IPR022911">
    <property type="entry name" value="Phe_tRNA_ligase_alpha1_bac"/>
</dbReference>
<dbReference type="InterPro" id="IPR002319">
    <property type="entry name" value="Phenylalanyl-tRNA_Synthase"/>
</dbReference>
<dbReference type="InterPro" id="IPR010978">
    <property type="entry name" value="tRNA-bd_arm"/>
</dbReference>
<dbReference type="NCBIfam" id="TIGR00468">
    <property type="entry name" value="pheS"/>
    <property type="match status" value="1"/>
</dbReference>
<dbReference type="PANTHER" id="PTHR11538:SF41">
    <property type="entry name" value="PHENYLALANINE--TRNA LIGASE, MITOCHONDRIAL"/>
    <property type="match status" value="1"/>
</dbReference>
<dbReference type="PANTHER" id="PTHR11538">
    <property type="entry name" value="PHENYLALANYL-TRNA SYNTHETASE"/>
    <property type="match status" value="1"/>
</dbReference>
<dbReference type="Pfam" id="PF02912">
    <property type="entry name" value="Phe_tRNA-synt_N"/>
    <property type="match status" value="1"/>
</dbReference>
<dbReference type="Pfam" id="PF01409">
    <property type="entry name" value="tRNA-synt_2d"/>
    <property type="match status" value="1"/>
</dbReference>
<dbReference type="SUPFAM" id="SSF55681">
    <property type="entry name" value="Class II aaRS and biotin synthetases"/>
    <property type="match status" value="1"/>
</dbReference>
<dbReference type="SUPFAM" id="SSF46589">
    <property type="entry name" value="tRNA-binding arm"/>
    <property type="match status" value="1"/>
</dbReference>
<dbReference type="PROSITE" id="PS50862">
    <property type="entry name" value="AA_TRNA_LIGASE_II"/>
    <property type="match status" value="1"/>
</dbReference>
<proteinExistence type="inferred from homology"/>